<dbReference type="GO" id="GO:0005576">
    <property type="term" value="C:extracellular region"/>
    <property type="evidence" value="ECO:0007669"/>
    <property type="project" value="UniProtKB-SubCell"/>
</dbReference>
<dbReference type="GO" id="GO:0042742">
    <property type="term" value="P:defense response to bacterium"/>
    <property type="evidence" value="ECO:0007669"/>
    <property type="project" value="UniProtKB-KW"/>
</dbReference>
<dbReference type="GO" id="GO:0019836">
    <property type="term" value="P:symbiont-mediated hemolysis of host erythrocyte"/>
    <property type="evidence" value="ECO:0007669"/>
    <property type="project" value="InterPro"/>
</dbReference>
<dbReference type="InterPro" id="IPR012518">
    <property type="entry name" value="Antimicrobial15"/>
</dbReference>
<dbReference type="InterPro" id="IPR004275">
    <property type="entry name" value="Frog_antimicrobial_propeptide"/>
</dbReference>
<dbReference type="InterPro" id="IPR016322">
    <property type="entry name" value="FSAP"/>
</dbReference>
<dbReference type="Pfam" id="PF08110">
    <property type="entry name" value="Antimicrobial15"/>
    <property type="match status" value="1"/>
</dbReference>
<dbReference type="Pfam" id="PF03032">
    <property type="entry name" value="FSAP_sig_propep"/>
    <property type="match status" value="1"/>
</dbReference>
<dbReference type="PIRSF" id="PIRSF001822">
    <property type="entry name" value="Dermaseptin_precursor"/>
    <property type="match status" value="1"/>
</dbReference>
<comment type="function">
    <text evidence="2">Has antibacterial activity against Gram-negative bacteria E.coli ATCC 25922 (MIC=80 uM), K.pneumoniae ATCC 700603 (MIC=310 uM) and S.choleraesuis ATCC 14028 (MIC=310 uM). Shows no hemolytic activity and no cytotoxicity.</text>
</comment>
<comment type="subcellular location">
    <subcellularLocation>
        <location evidence="2">Secreted</location>
    </subcellularLocation>
</comment>
<comment type="tissue specificity">
    <text evidence="5">Expressed by the skin glands.</text>
</comment>
<comment type="mass spectrometry"/>
<comment type="similarity">
    <text evidence="4">Belongs to the frog skin active peptide (FSAP) family. Ocellatin subfamily.</text>
</comment>
<comment type="online information" name="The antimicrobial peptide database">
    <link uri="https://wangapd3.com/database/query_output.php?ID=02598"/>
</comment>
<proteinExistence type="evidence at protein level"/>
<organism>
    <name type="scientific">Leptodactylus pustulatus</name>
    <name type="common">Ceara white-lipped frog</name>
    <dbReference type="NCBI Taxonomy" id="1349691"/>
    <lineage>
        <taxon>Eukaryota</taxon>
        <taxon>Metazoa</taxon>
        <taxon>Chordata</taxon>
        <taxon>Craniata</taxon>
        <taxon>Vertebrata</taxon>
        <taxon>Euteleostomi</taxon>
        <taxon>Amphibia</taxon>
        <taxon>Batrachia</taxon>
        <taxon>Anura</taxon>
        <taxon>Neobatrachia</taxon>
        <taxon>Hyloidea</taxon>
        <taxon>Leptodactylidae</taxon>
        <taxon>Leptodactylinae</taxon>
        <taxon>Leptodactylus</taxon>
    </lineage>
</organism>
<keyword id="KW-0027">Amidation</keyword>
<keyword id="KW-0878">Amphibian defense peptide</keyword>
<keyword id="KW-0044">Antibiotic</keyword>
<keyword id="KW-0929">Antimicrobial</keyword>
<keyword id="KW-0165">Cleavage on pair of basic residues</keyword>
<keyword id="KW-0903">Direct protein sequencing</keyword>
<keyword id="KW-0964">Secreted</keyword>
<keyword id="KW-0732">Signal</keyword>
<evidence type="ECO:0000255" key="1"/>
<evidence type="ECO:0000269" key="2">
    <source>
    </source>
</evidence>
<evidence type="ECO:0000303" key="3">
    <source>
    </source>
</evidence>
<evidence type="ECO:0000305" key="4"/>
<evidence type="ECO:0000305" key="5">
    <source>
    </source>
</evidence>
<reference evidence="4" key="1">
    <citation type="journal article" date="2015" name="J. Nat. Prod.">
        <title>Characterization and biological activities of ocellatin peptides from the skin secretion of the frog Leptodactylus pustulatus.</title>
        <authorList>
            <person name="Marani M.M."/>
            <person name="Dourado F.S."/>
            <person name="Quelemes P.V."/>
            <person name="de Araujo A.R."/>
            <person name="Perfeito M.L."/>
            <person name="Barbosa E.A."/>
            <person name="Veras L.M."/>
            <person name="Coelho A.L."/>
            <person name="Andrade E.B."/>
            <person name="Eaton P."/>
            <person name="Longo J.P."/>
            <person name="Azevedo R.B."/>
            <person name="Delerue-Matos C."/>
            <person name="Leite J.R."/>
        </authorList>
    </citation>
    <scope>NUCLEOTIDE SEQUENCE [MRNA]</scope>
    <scope>PROTEIN SEQUENCE OF 42-66</scope>
    <scope>FUNCTION</scope>
    <scope>SUBCELLULAR LOCATION</scope>
    <scope>MASS SPECTROMETRY</scope>
    <scope>AMIDATION AT VAL-66</scope>
    <scope>IDENTIFICATION BY MASS SPECTROMETRY</scope>
    <source>
        <tissue evidence="3">Skin secretion</tissue>
    </source>
</reference>
<sequence>MAFLKKSLFLVLFLGLVSLSICDEEKRQDEDDDDDDDEEKRGVFDIIKGAGKQLIAHAMGKIAEKV</sequence>
<protein>
    <recommendedName>
        <fullName evidence="3">Ocellatin-PT4</fullName>
    </recommendedName>
</protein>
<name>OCE4_LEPPU</name>
<accession>C0HJZ9</accession>
<feature type="signal peptide" evidence="1">
    <location>
        <begin position="1"/>
        <end position="22"/>
    </location>
</feature>
<feature type="propeptide" id="PRO_0000436214" evidence="4">
    <location>
        <begin position="23"/>
        <end position="39"/>
    </location>
</feature>
<feature type="peptide" id="PRO_0000436215" description="Ocellatin-PT4" evidence="2">
    <location>
        <begin position="42"/>
        <end position="66"/>
    </location>
</feature>
<feature type="modified residue" description="Valine amide" evidence="2">
    <location>
        <position position="66"/>
    </location>
</feature>